<organism>
    <name type="scientific">Pectobacterium atrosepticum (strain SCRI 1043 / ATCC BAA-672)</name>
    <name type="common">Erwinia carotovora subsp. atroseptica</name>
    <dbReference type="NCBI Taxonomy" id="218491"/>
    <lineage>
        <taxon>Bacteria</taxon>
        <taxon>Pseudomonadati</taxon>
        <taxon>Pseudomonadota</taxon>
        <taxon>Gammaproteobacteria</taxon>
        <taxon>Enterobacterales</taxon>
        <taxon>Pectobacteriaceae</taxon>
        <taxon>Pectobacterium</taxon>
    </lineage>
</organism>
<proteinExistence type="inferred from homology"/>
<gene>
    <name evidence="1" type="primary">araA</name>
    <name type="ordered locus">ECA2275</name>
</gene>
<comment type="function">
    <text evidence="1">Catalyzes the conversion of L-arabinose to L-ribulose.</text>
</comment>
<comment type="catalytic activity">
    <reaction evidence="1">
        <text>beta-L-arabinopyranose = L-ribulose</text>
        <dbReference type="Rhea" id="RHEA:14821"/>
        <dbReference type="ChEBI" id="CHEBI:16880"/>
        <dbReference type="ChEBI" id="CHEBI:40886"/>
        <dbReference type="EC" id="5.3.1.4"/>
    </reaction>
</comment>
<comment type="cofactor">
    <cofactor evidence="1">
        <name>Mn(2+)</name>
        <dbReference type="ChEBI" id="CHEBI:29035"/>
    </cofactor>
    <text evidence="1">Binds 1 Mn(2+) ion per subunit.</text>
</comment>
<comment type="pathway">
    <text evidence="1">Carbohydrate degradation; L-arabinose degradation via L-ribulose; D-xylulose 5-phosphate from L-arabinose (bacterial route): step 1/3.</text>
</comment>
<comment type="subunit">
    <text evidence="1">Homohexamer.</text>
</comment>
<comment type="similarity">
    <text evidence="1">Belongs to the arabinose isomerase family.</text>
</comment>
<dbReference type="EC" id="5.3.1.4" evidence="1"/>
<dbReference type="EMBL" id="BX950851">
    <property type="protein sequence ID" value="CAG75178.1"/>
    <property type="molecule type" value="Genomic_DNA"/>
</dbReference>
<dbReference type="RefSeq" id="WP_011093833.1">
    <property type="nucleotide sequence ID" value="NC_004547.2"/>
</dbReference>
<dbReference type="SMR" id="Q6D4W5"/>
<dbReference type="STRING" id="218491.ECA2275"/>
<dbReference type="GeneID" id="57209004"/>
<dbReference type="KEGG" id="eca:ECA2275"/>
<dbReference type="PATRIC" id="fig|218491.5.peg.2305"/>
<dbReference type="eggNOG" id="COG2160">
    <property type="taxonomic scope" value="Bacteria"/>
</dbReference>
<dbReference type="HOGENOM" id="CLU_045663_0_0_6"/>
<dbReference type="OrthoDB" id="9765600at2"/>
<dbReference type="UniPathway" id="UPA00145">
    <property type="reaction ID" value="UER00565"/>
</dbReference>
<dbReference type="Proteomes" id="UP000007966">
    <property type="component" value="Chromosome"/>
</dbReference>
<dbReference type="GO" id="GO:0005829">
    <property type="term" value="C:cytosol"/>
    <property type="evidence" value="ECO:0007669"/>
    <property type="project" value="TreeGrafter"/>
</dbReference>
<dbReference type="GO" id="GO:0008733">
    <property type="term" value="F:L-arabinose isomerase activity"/>
    <property type="evidence" value="ECO:0007669"/>
    <property type="project" value="UniProtKB-UniRule"/>
</dbReference>
<dbReference type="GO" id="GO:0030145">
    <property type="term" value="F:manganese ion binding"/>
    <property type="evidence" value="ECO:0007669"/>
    <property type="project" value="UniProtKB-UniRule"/>
</dbReference>
<dbReference type="GO" id="GO:0019569">
    <property type="term" value="P:L-arabinose catabolic process to xylulose 5-phosphate"/>
    <property type="evidence" value="ECO:0007669"/>
    <property type="project" value="UniProtKB-UniRule"/>
</dbReference>
<dbReference type="CDD" id="cd03557">
    <property type="entry name" value="L-arabinose_isomerase"/>
    <property type="match status" value="1"/>
</dbReference>
<dbReference type="FunFam" id="3.40.50.10940:FF:000001">
    <property type="entry name" value="L-arabinose isomerase"/>
    <property type="match status" value="1"/>
</dbReference>
<dbReference type="Gene3D" id="3.40.50.10940">
    <property type="match status" value="1"/>
</dbReference>
<dbReference type="HAMAP" id="MF_00519">
    <property type="entry name" value="Arabinose_Isome"/>
    <property type="match status" value="1"/>
</dbReference>
<dbReference type="InterPro" id="IPR024664">
    <property type="entry name" value="Ara_Isoase_C"/>
</dbReference>
<dbReference type="InterPro" id="IPR055390">
    <property type="entry name" value="AraA_central"/>
</dbReference>
<dbReference type="InterPro" id="IPR055389">
    <property type="entry name" value="AraA_N"/>
</dbReference>
<dbReference type="InterPro" id="IPR038583">
    <property type="entry name" value="AraA_N_sf"/>
</dbReference>
<dbReference type="InterPro" id="IPR004216">
    <property type="entry name" value="Fuc/Ara_isomerase_C"/>
</dbReference>
<dbReference type="InterPro" id="IPR009015">
    <property type="entry name" value="Fucose_isomerase_N/cen_sf"/>
</dbReference>
<dbReference type="InterPro" id="IPR003762">
    <property type="entry name" value="Lara_isomerase"/>
</dbReference>
<dbReference type="NCBIfam" id="NF002795">
    <property type="entry name" value="PRK02929.1"/>
    <property type="match status" value="1"/>
</dbReference>
<dbReference type="PANTHER" id="PTHR38464">
    <property type="entry name" value="L-ARABINOSE ISOMERASE"/>
    <property type="match status" value="1"/>
</dbReference>
<dbReference type="PANTHER" id="PTHR38464:SF1">
    <property type="entry name" value="L-ARABINOSE ISOMERASE"/>
    <property type="match status" value="1"/>
</dbReference>
<dbReference type="Pfam" id="PF24856">
    <property type="entry name" value="AraA_central"/>
    <property type="match status" value="1"/>
</dbReference>
<dbReference type="Pfam" id="PF02610">
    <property type="entry name" value="AraA_N"/>
    <property type="match status" value="1"/>
</dbReference>
<dbReference type="Pfam" id="PF11762">
    <property type="entry name" value="Arabinose_Iso_C"/>
    <property type="match status" value="1"/>
</dbReference>
<dbReference type="PIRSF" id="PIRSF001478">
    <property type="entry name" value="L-ara_isomerase"/>
    <property type="match status" value="1"/>
</dbReference>
<dbReference type="SUPFAM" id="SSF50443">
    <property type="entry name" value="FucI/AraA C-terminal domain-like"/>
    <property type="match status" value="1"/>
</dbReference>
<dbReference type="SUPFAM" id="SSF53743">
    <property type="entry name" value="FucI/AraA N-terminal and middle domains"/>
    <property type="match status" value="1"/>
</dbReference>
<sequence>MDHFKQLEVWFVIGSQHLYGPETLRQVKENAEKVVAGLNQQANLPVKLVLKPLVKTPDEILALCRDANYQDNCIGLLTWLHTFSPAKMWIGGLSVLSKPLLQFHTQFNAEVPWDTMDMDFMNLNQTAHGGREFGFIGARMRQAHQVVVGHWQDKNAHVRIGKWMRVAAAIQESKQLKVARFGDNMREVAVTEGDKVGAQIQFGYSVSAWGLGDLTAVVDAVSKGDIDALIEEYETSYQLTDAVKLNGANRQNLLDAAQIELGMKRFLEQGGYHAFTTDFENLYGLKQLPGLAVQRLMQQGYGFGGEGDWKTAALLRIMKVMAGGLSGGTSFMEDYTYNFQNGNDLVVGSHMLEVCPTIAKEQKPILDAQHLGIGGKADPARLIFSTPAGPSLNASVIDMGDRFRMLVNLVDTIEQPRPLPKLPVARAIWKAQPSLEVAAEAWILAGGAHHTVFSQALDLDHMRLYAEMQNIELLVIDNETRLHEFKDALRWNEVYYKLCSR</sequence>
<reference key="1">
    <citation type="journal article" date="2004" name="Proc. Natl. Acad. Sci. U.S.A.">
        <title>Genome sequence of the enterobacterial phytopathogen Erwinia carotovora subsp. atroseptica and characterization of virulence factors.</title>
        <authorList>
            <person name="Bell K.S."/>
            <person name="Sebaihia M."/>
            <person name="Pritchard L."/>
            <person name="Holden M.T.G."/>
            <person name="Hyman L.J."/>
            <person name="Holeva M.C."/>
            <person name="Thomson N.R."/>
            <person name="Bentley S.D."/>
            <person name="Churcher L.J.C."/>
            <person name="Mungall K."/>
            <person name="Atkin R."/>
            <person name="Bason N."/>
            <person name="Brooks K."/>
            <person name="Chillingworth T."/>
            <person name="Clark K."/>
            <person name="Doggett J."/>
            <person name="Fraser A."/>
            <person name="Hance Z."/>
            <person name="Hauser H."/>
            <person name="Jagels K."/>
            <person name="Moule S."/>
            <person name="Norbertczak H."/>
            <person name="Ormond D."/>
            <person name="Price C."/>
            <person name="Quail M.A."/>
            <person name="Sanders M."/>
            <person name="Walker D."/>
            <person name="Whitehead S."/>
            <person name="Salmond G.P.C."/>
            <person name="Birch P.R.J."/>
            <person name="Parkhill J."/>
            <person name="Toth I.K."/>
        </authorList>
    </citation>
    <scope>NUCLEOTIDE SEQUENCE [LARGE SCALE GENOMIC DNA]</scope>
    <source>
        <strain>SCRI 1043 / ATCC BAA-672</strain>
    </source>
</reference>
<evidence type="ECO:0000255" key="1">
    <source>
        <dbReference type="HAMAP-Rule" id="MF_00519"/>
    </source>
</evidence>
<protein>
    <recommendedName>
        <fullName evidence="1">L-arabinose isomerase</fullName>
        <ecNumber evidence="1">5.3.1.4</ecNumber>
    </recommendedName>
</protein>
<feature type="chain" id="PRO_0000198388" description="L-arabinose isomerase">
    <location>
        <begin position="1"/>
        <end position="501"/>
    </location>
</feature>
<feature type="binding site" evidence="1">
    <location>
        <position position="306"/>
    </location>
    <ligand>
        <name>Mn(2+)</name>
        <dbReference type="ChEBI" id="CHEBI:29035"/>
    </ligand>
</feature>
<feature type="binding site" evidence="1">
    <location>
        <position position="333"/>
    </location>
    <ligand>
        <name>Mn(2+)</name>
        <dbReference type="ChEBI" id="CHEBI:29035"/>
    </ligand>
</feature>
<feature type="binding site" evidence="1">
    <location>
        <position position="350"/>
    </location>
    <ligand>
        <name>Mn(2+)</name>
        <dbReference type="ChEBI" id="CHEBI:29035"/>
    </ligand>
</feature>
<feature type="binding site" evidence="1">
    <location>
        <position position="450"/>
    </location>
    <ligand>
        <name>Mn(2+)</name>
        <dbReference type="ChEBI" id="CHEBI:29035"/>
    </ligand>
</feature>
<name>ARAA_PECAS</name>
<accession>Q6D4W5</accession>
<keyword id="KW-0054">Arabinose catabolism</keyword>
<keyword id="KW-0119">Carbohydrate metabolism</keyword>
<keyword id="KW-0413">Isomerase</keyword>
<keyword id="KW-0464">Manganese</keyword>
<keyword id="KW-0479">Metal-binding</keyword>
<keyword id="KW-1185">Reference proteome</keyword>